<gene>
    <name evidence="1" type="primary">nagB</name>
    <name type="ordered locus">BAPKO_0153</name>
    <name type="ordered locus">BafPKo_0149</name>
</gene>
<comment type="function">
    <text evidence="1">Catalyzes the reversible isomerization-deamination of glucosamine 6-phosphate (GlcN6P) to form fructose 6-phosphate (Fru6P) and ammonium ion.</text>
</comment>
<comment type="catalytic activity">
    <reaction evidence="1">
        <text>alpha-D-glucosamine 6-phosphate + H2O = beta-D-fructose 6-phosphate + NH4(+)</text>
        <dbReference type="Rhea" id="RHEA:12172"/>
        <dbReference type="ChEBI" id="CHEBI:15377"/>
        <dbReference type="ChEBI" id="CHEBI:28938"/>
        <dbReference type="ChEBI" id="CHEBI:57634"/>
        <dbReference type="ChEBI" id="CHEBI:75989"/>
        <dbReference type="EC" id="3.5.99.6"/>
    </reaction>
</comment>
<comment type="activity regulation">
    <text evidence="1">Allosterically activated by N-acetylglucosamine 6-phosphate (GlcNAc6P).</text>
</comment>
<comment type="pathway">
    <text evidence="1">Amino-sugar metabolism; N-acetylneuraminate degradation; D-fructose 6-phosphate from N-acetylneuraminate: step 5/5.</text>
</comment>
<comment type="similarity">
    <text evidence="1">Belongs to the glucosamine/galactosamine-6-phosphate isomerase family. NagB subfamily.</text>
</comment>
<evidence type="ECO:0000255" key="1">
    <source>
        <dbReference type="HAMAP-Rule" id="MF_01241"/>
    </source>
</evidence>
<proteinExistence type="inferred from homology"/>
<sequence>MRLIIRPTYEDVSKWAANHVAQKIKEFSPTKKKPFILGLPTGSSPIGMYKNLIELNKSGKISFQNVITFNMDEYIGIEQNHPESYHSFMWKNFFSHIDIKKENINILNGNALNLEKECEEYEKKIKSFGGIMLFVGGIGPDGHIAFNEPGSSLTSRTRIKTLTQDTIIANSRFFEGNVNKVPKSALTVGIGTIMDSQEILIIVNGHNKARALKHAIEKGINHMWTISALQLHKNAIIVSDKNATYELKVGTVEYFNDIERKNFNNDLK</sequence>
<name>NAGB_BORAP</name>
<keyword id="KW-0021">Allosteric enzyme</keyword>
<keyword id="KW-0119">Carbohydrate metabolism</keyword>
<keyword id="KW-0378">Hydrolase</keyword>
<accession>Q0SP13</accession>
<accession>G0IQZ6</accession>
<protein>
    <recommendedName>
        <fullName evidence="1">Glucosamine-6-phosphate deaminase</fullName>
        <ecNumber evidence="1">3.5.99.6</ecNumber>
    </recommendedName>
    <alternativeName>
        <fullName evidence="1">GlcN6P deaminase</fullName>
        <shortName evidence="1">GNPDA</shortName>
    </alternativeName>
    <alternativeName>
        <fullName evidence="1">Glucosamine-6-phosphate isomerase</fullName>
    </alternativeName>
</protein>
<organism>
    <name type="scientific">Borreliella afzelii (strain PKo)</name>
    <name type="common">Borrelia afzelii</name>
    <dbReference type="NCBI Taxonomy" id="390236"/>
    <lineage>
        <taxon>Bacteria</taxon>
        <taxon>Pseudomonadati</taxon>
        <taxon>Spirochaetota</taxon>
        <taxon>Spirochaetia</taxon>
        <taxon>Spirochaetales</taxon>
        <taxon>Borreliaceae</taxon>
        <taxon>Borreliella</taxon>
    </lineage>
</organism>
<feature type="chain" id="PRO_1000066964" description="Glucosamine-6-phosphate deaminase">
    <location>
        <begin position="1"/>
        <end position="268"/>
    </location>
</feature>
<feature type="active site" description="Proton acceptor; for enolization step" evidence="1">
    <location>
        <position position="72"/>
    </location>
</feature>
<feature type="active site" description="For ring-opening step" evidence="1">
    <location>
        <position position="141"/>
    </location>
</feature>
<feature type="active site" description="Proton acceptor; for ring-opening step" evidence="1">
    <location>
        <position position="143"/>
    </location>
</feature>
<feature type="active site" description="For ring-opening step" evidence="1">
    <location>
        <position position="148"/>
    </location>
</feature>
<feature type="site" description="Part of the allosteric site" evidence="1">
    <location>
        <position position="151"/>
    </location>
</feature>
<feature type="site" description="Part of the allosteric site" evidence="1">
    <location>
        <position position="158"/>
    </location>
</feature>
<feature type="site" description="Part of the allosteric site" evidence="1">
    <location>
        <position position="160"/>
    </location>
</feature>
<feature type="site" description="Part of the allosteric site" evidence="1">
    <location>
        <position position="161"/>
    </location>
</feature>
<feature type="site" description="Part of the allosteric site" evidence="1">
    <location>
        <position position="254"/>
    </location>
</feature>
<dbReference type="EC" id="3.5.99.6" evidence="1"/>
<dbReference type="EMBL" id="CP000395">
    <property type="protein sequence ID" value="ABH01415.1"/>
    <property type="molecule type" value="Genomic_DNA"/>
</dbReference>
<dbReference type="EMBL" id="CP002933">
    <property type="protein sequence ID" value="AEL69382.1"/>
    <property type="molecule type" value="Genomic_DNA"/>
</dbReference>
<dbReference type="RefSeq" id="WP_011600857.1">
    <property type="nucleotide sequence ID" value="NZ_CP160066.1"/>
</dbReference>
<dbReference type="SMR" id="Q0SP13"/>
<dbReference type="STRING" id="29518.BLA32_03545"/>
<dbReference type="KEGG" id="baf:BAPKO_0153"/>
<dbReference type="KEGG" id="bafz:BafPKo_0149"/>
<dbReference type="PATRIC" id="fig|390236.22.peg.147"/>
<dbReference type="eggNOG" id="COG0363">
    <property type="taxonomic scope" value="Bacteria"/>
</dbReference>
<dbReference type="HOGENOM" id="CLU_049611_0_1_12"/>
<dbReference type="OrthoDB" id="9791139at2"/>
<dbReference type="UniPathway" id="UPA00629">
    <property type="reaction ID" value="UER00684"/>
</dbReference>
<dbReference type="Proteomes" id="UP000005216">
    <property type="component" value="Chromosome"/>
</dbReference>
<dbReference type="GO" id="GO:0005737">
    <property type="term" value="C:cytoplasm"/>
    <property type="evidence" value="ECO:0007669"/>
    <property type="project" value="TreeGrafter"/>
</dbReference>
<dbReference type="GO" id="GO:0004342">
    <property type="term" value="F:glucosamine-6-phosphate deaminase activity"/>
    <property type="evidence" value="ECO:0007669"/>
    <property type="project" value="UniProtKB-UniRule"/>
</dbReference>
<dbReference type="GO" id="GO:0042802">
    <property type="term" value="F:identical protein binding"/>
    <property type="evidence" value="ECO:0007669"/>
    <property type="project" value="TreeGrafter"/>
</dbReference>
<dbReference type="GO" id="GO:0005975">
    <property type="term" value="P:carbohydrate metabolic process"/>
    <property type="evidence" value="ECO:0007669"/>
    <property type="project" value="InterPro"/>
</dbReference>
<dbReference type="GO" id="GO:0006043">
    <property type="term" value="P:glucosamine catabolic process"/>
    <property type="evidence" value="ECO:0007669"/>
    <property type="project" value="TreeGrafter"/>
</dbReference>
<dbReference type="GO" id="GO:0006046">
    <property type="term" value="P:N-acetylglucosamine catabolic process"/>
    <property type="evidence" value="ECO:0007669"/>
    <property type="project" value="TreeGrafter"/>
</dbReference>
<dbReference type="GO" id="GO:0019262">
    <property type="term" value="P:N-acetylneuraminate catabolic process"/>
    <property type="evidence" value="ECO:0007669"/>
    <property type="project" value="UniProtKB-UniRule"/>
</dbReference>
<dbReference type="CDD" id="cd01399">
    <property type="entry name" value="GlcN6P_deaminase"/>
    <property type="match status" value="1"/>
</dbReference>
<dbReference type="FunFam" id="3.40.50.1360:FF:000002">
    <property type="entry name" value="Glucosamine-6-phosphate deaminase"/>
    <property type="match status" value="1"/>
</dbReference>
<dbReference type="Gene3D" id="3.40.50.1360">
    <property type="match status" value="1"/>
</dbReference>
<dbReference type="HAMAP" id="MF_01241">
    <property type="entry name" value="GlcN6P_deamin"/>
    <property type="match status" value="1"/>
</dbReference>
<dbReference type="InterPro" id="IPR006148">
    <property type="entry name" value="Glc/Gal-6P_isomerase"/>
</dbReference>
<dbReference type="InterPro" id="IPR004547">
    <property type="entry name" value="Glucosamine6P_isomerase"/>
</dbReference>
<dbReference type="InterPro" id="IPR018321">
    <property type="entry name" value="Glucosamine6P_isomerase_CS"/>
</dbReference>
<dbReference type="InterPro" id="IPR037171">
    <property type="entry name" value="NagB/RpiA_transferase-like"/>
</dbReference>
<dbReference type="NCBIfam" id="TIGR00502">
    <property type="entry name" value="nagB"/>
    <property type="match status" value="1"/>
</dbReference>
<dbReference type="PANTHER" id="PTHR11280">
    <property type="entry name" value="GLUCOSAMINE-6-PHOSPHATE ISOMERASE"/>
    <property type="match status" value="1"/>
</dbReference>
<dbReference type="PANTHER" id="PTHR11280:SF5">
    <property type="entry name" value="GLUCOSAMINE-6-PHOSPHATE ISOMERASE"/>
    <property type="match status" value="1"/>
</dbReference>
<dbReference type="Pfam" id="PF01182">
    <property type="entry name" value="Glucosamine_iso"/>
    <property type="match status" value="1"/>
</dbReference>
<dbReference type="SUPFAM" id="SSF100950">
    <property type="entry name" value="NagB/RpiA/CoA transferase-like"/>
    <property type="match status" value="1"/>
</dbReference>
<dbReference type="PROSITE" id="PS01161">
    <property type="entry name" value="GLC_GALNAC_ISOMERASE"/>
    <property type="match status" value="1"/>
</dbReference>
<reference key="1">
    <citation type="journal article" date="2006" name="BMC Genomics">
        <title>Comparative genome analysis: selection pressure on the Borrelia vls cassettes is essential for infectivity.</title>
        <authorList>
            <person name="Gloeckner G."/>
            <person name="Schulte-Spechtel U."/>
            <person name="Schilhabel M."/>
            <person name="Felder M."/>
            <person name="Suehnel J."/>
            <person name="Wilske B."/>
            <person name="Platzer M."/>
        </authorList>
    </citation>
    <scope>NUCLEOTIDE SEQUENCE [LARGE SCALE GENOMIC DNA]</scope>
    <source>
        <strain>PKo</strain>
    </source>
</reference>
<reference key="2">
    <citation type="journal article" date="2011" name="J. Bacteriol.">
        <title>Whole-genome sequences of two Borrelia afzelii and two Borrelia garinii Lyme disease agent isolates.</title>
        <authorList>
            <person name="Casjens S.R."/>
            <person name="Mongodin E.F."/>
            <person name="Qiu W.G."/>
            <person name="Dunn J.J."/>
            <person name="Luft B.J."/>
            <person name="Fraser-Liggett C.M."/>
            <person name="Schutzer S.E."/>
        </authorList>
    </citation>
    <scope>NUCLEOTIDE SEQUENCE [LARGE SCALE GENOMIC DNA]</scope>
    <source>
        <strain>PKo</strain>
    </source>
</reference>